<accession>B4HHG8</accession>
<evidence type="ECO:0000250" key="1">
    <source>
        <dbReference type="UniProtKB" id="K7IM66"/>
    </source>
</evidence>
<evidence type="ECO:0000255" key="2">
    <source>
        <dbReference type="HAMAP-Rule" id="MF_03003"/>
    </source>
</evidence>
<evidence type="ECO:0000256" key="3">
    <source>
        <dbReference type="SAM" id="MobiDB-lite"/>
    </source>
</evidence>
<dbReference type="EMBL" id="CH480815">
    <property type="protein sequence ID" value="EDW42507.1"/>
    <property type="molecule type" value="Genomic_DNA"/>
</dbReference>
<dbReference type="SMR" id="B4HHG8"/>
<dbReference type="STRING" id="7238.B4HHG8"/>
<dbReference type="EnsemblMetazoa" id="FBtr0209022">
    <property type="protein sequence ID" value="FBpp0207514"/>
    <property type="gene ID" value="FBgn0180892"/>
</dbReference>
<dbReference type="EnsemblMetazoa" id="XM_002031485.2">
    <property type="protein sequence ID" value="XP_002031521.1"/>
    <property type="gene ID" value="LOC6606723"/>
</dbReference>
<dbReference type="GeneID" id="6606723"/>
<dbReference type="KEGG" id="dse:6606723"/>
<dbReference type="CTD" id="41475"/>
<dbReference type="HOGENOM" id="CLU_024521_2_0_1"/>
<dbReference type="OMA" id="CKHNGVI"/>
<dbReference type="OrthoDB" id="28344at7215"/>
<dbReference type="PhylomeDB" id="B4HHG8"/>
<dbReference type="Proteomes" id="UP000001292">
    <property type="component" value="Unassembled WGS sequence"/>
</dbReference>
<dbReference type="GO" id="GO:0016282">
    <property type="term" value="C:eukaryotic 43S preinitiation complex"/>
    <property type="evidence" value="ECO:0007669"/>
    <property type="project" value="UniProtKB-UniRule"/>
</dbReference>
<dbReference type="GO" id="GO:0033290">
    <property type="term" value="C:eukaryotic 48S preinitiation complex"/>
    <property type="evidence" value="ECO:0007669"/>
    <property type="project" value="UniProtKB-UniRule"/>
</dbReference>
<dbReference type="GO" id="GO:0005852">
    <property type="term" value="C:eukaryotic translation initiation factor 3 complex"/>
    <property type="evidence" value="ECO:0000250"/>
    <property type="project" value="UniProtKB"/>
</dbReference>
<dbReference type="GO" id="GO:0098808">
    <property type="term" value="F:mRNA cap binding"/>
    <property type="evidence" value="ECO:0007669"/>
    <property type="project" value="UniProtKB-UniRule"/>
</dbReference>
<dbReference type="GO" id="GO:0003743">
    <property type="term" value="F:translation initiation factor activity"/>
    <property type="evidence" value="ECO:0000250"/>
    <property type="project" value="UniProtKB"/>
</dbReference>
<dbReference type="GO" id="GO:0002191">
    <property type="term" value="P:cap-dependent translational initiation"/>
    <property type="evidence" value="ECO:0007669"/>
    <property type="project" value="UniProtKB-UniRule"/>
</dbReference>
<dbReference type="GO" id="GO:0001732">
    <property type="term" value="P:formation of cytoplasmic translation initiation complex"/>
    <property type="evidence" value="ECO:0007669"/>
    <property type="project" value="UniProtKB-UniRule"/>
</dbReference>
<dbReference type="GO" id="GO:0006446">
    <property type="term" value="P:regulation of translational initiation"/>
    <property type="evidence" value="ECO:0000250"/>
    <property type="project" value="UniProtKB"/>
</dbReference>
<dbReference type="HAMAP" id="MF_03003">
    <property type="entry name" value="eIF3d"/>
    <property type="match status" value="1"/>
</dbReference>
<dbReference type="InterPro" id="IPR007783">
    <property type="entry name" value="eIF3d"/>
</dbReference>
<dbReference type="PANTHER" id="PTHR12399">
    <property type="entry name" value="EUKARYOTIC TRANSLATION INITIATION FACTOR 3 SUBUNIT 7"/>
    <property type="match status" value="1"/>
</dbReference>
<dbReference type="PANTHER" id="PTHR12399:SF0">
    <property type="entry name" value="EUKARYOTIC TRANSLATION INITIATION FACTOR 3 SUBUNIT D"/>
    <property type="match status" value="1"/>
</dbReference>
<dbReference type="Pfam" id="PF05091">
    <property type="entry name" value="eIF-3_zeta"/>
    <property type="match status" value="1"/>
</dbReference>
<dbReference type="PIRSF" id="PIRSF016281">
    <property type="entry name" value="EIF-3_zeta"/>
    <property type="match status" value="1"/>
</dbReference>
<proteinExistence type="inferred from homology"/>
<gene>
    <name evidence="2" type="primary">eIF3d2</name>
    <name evidence="2" type="synonym">eIF3-S7-2</name>
    <name type="ORF">GM26037</name>
</gene>
<sequence>MSNYAPFIKPYVEYNEHGWGPCEVPELDVPYQPFCKSDRLGKICDWTAMVPEKKFPSKYASTFGNNSQYAYFYEDDDSTFHLVDTTGSKATKPYQRGRYRTNMRNNVRTRGRTGRGTPNIASLGGSTAGGATASTTKYGKGRHTRNTQNVGRRFGRNAPTRIRESSVMVQSNWVSIEEIDFPRLLKLALPNIKEGKDIATCGSLEFYDKLYDRVNLRNEKPLQKMARVVHTVTTTDDPVIRRLSRTMGNVFATDEILSTIMCCTRSNYSWDVVVEKLGTKVFLDKRYNDQFDLLTVNETSVEPPMEEEGSINSAHSLAMEATLINHNFSQQVLRIGDQEQRFMFEEPNPFEEPGVDLASIGYRYRQWDLGNDVVLIARCKHNAVIQGPNGDMQFLSIKALNEWDSKVTNSVEWRQKLDTQRGAVLASELRNNACKLARWTVEAVLAGSDQLKLGYVSRMNPRDHLRHVILGTQQFKPQEFATQINLNMDNSWGVLRCLIDLVMKQPDGKYLIMKDPNKPMIRLYDVPENAFDSDRDEEESSEPLSNSNDN</sequence>
<name>EI3D2_DROSE</name>
<organism>
    <name type="scientific">Drosophila sechellia</name>
    <name type="common">Fruit fly</name>
    <dbReference type="NCBI Taxonomy" id="7238"/>
    <lineage>
        <taxon>Eukaryota</taxon>
        <taxon>Metazoa</taxon>
        <taxon>Ecdysozoa</taxon>
        <taxon>Arthropoda</taxon>
        <taxon>Hexapoda</taxon>
        <taxon>Insecta</taxon>
        <taxon>Pterygota</taxon>
        <taxon>Neoptera</taxon>
        <taxon>Endopterygota</taxon>
        <taxon>Diptera</taxon>
        <taxon>Brachycera</taxon>
        <taxon>Muscomorpha</taxon>
        <taxon>Ephydroidea</taxon>
        <taxon>Drosophilidae</taxon>
        <taxon>Drosophila</taxon>
        <taxon>Sophophora</taxon>
    </lineage>
</organism>
<protein>
    <recommendedName>
        <fullName evidence="2">Eukaryotic translation initiation factor 3 subunit D-2</fullName>
        <shortName evidence="2">eIF3d-2</shortName>
    </recommendedName>
    <alternativeName>
        <fullName evidence="2">Eukaryotic translation initiation factor 3 subunit 7-2</fullName>
    </alternativeName>
</protein>
<keyword id="KW-0963">Cytoplasm</keyword>
<keyword id="KW-0396">Initiation factor</keyword>
<keyword id="KW-0648">Protein biosynthesis</keyword>
<keyword id="KW-1185">Reference proteome</keyword>
<keyword id="KW-0694">RNA-binding</keyword>
<feature type="chain" id="PRO_0000364157" description="Eukaryotic translation initiation factor 3 subunit D-2">
    <location>
        <begin position="1"/>
        <end position="550"/>
    </location>
</feature>
<feature type="region of interest" description="Disordered" evidence="3">
    <location>
        <begin position="108"/>
        <end position="152"/>
    </location>
</feature>
<feature type="region of interest" description="RNA gate" evidence="1">
    <location>
        <begin position="290"/>
        <end position="304"/>
    </location>
</feature>
<feature type="region of interest" description="Disordered" evidence="3">
    <location>
        <begin position="527"/>
        <end position="550"/>
    </location>
</feature>
<feature type="compositionally biased region" description="Low complexity" evidence="3">
    <location>
        <begin position="115"/>
        <end position="136"/>
    </location>
</feature>
<reference key="1">
    <citation type="journal article" date="2007" name="Nature">
        <title>Evolution of genes and genomes on the Drosophila phylogeny.</title>
        <authorList>
            <consortium name="Drosophila 12 genomes consortium"/>
        </authorList>
    </citation>
    <scope>NUCLEOTIDE SEQUENCE [LARGE SCALE GENOMIC DNA]</scope>
    <source>
        <strain>Rob3c / Tucson 14021-0248.25</strain>
    </source>
</reference>
<comment type="function">
    <text evidence="2">mRNA cap-binding component of the eukaryotic translation initiation factor 3 (eIF-3) complex, which is involved in protein synthesis of a specialized repertoire of mRNAs and, together with other initiation factors, stimulates binding of mRNA and methionyl-tRNAi to the 40S ribosome. The eIF-3 complex specifically targets and initiates translation of a subset of mRNAs involved in cell proliferation. In the eIF-3 complex, eif3d specifically recognizes and binds the 7-methylguanosine cap of a subset of mRNAs.</text>
</comment>
<comment type="subunit">
    <text evidence="2">Component of the eukaryotic translation initiation factor 3 (eIF-3) complex. The eIF-3 complex interacts with pix.</text>
</comment>
<comment type="subcellular location">
    <subcellularLocation>
        <location evidence="2">Cytoplasm</location>
    </subcellularLocation>
</comment>
<comment type="domain">
    <text evidence="2">The RNA gate region regulates mRNA cap recognition to prevent promiscuous mRNA-binding before assembly of eif3d into the full eukaryotic translation initiation factor 3 (eIF-3) complex.</text>
</comment>
<comment type="similarity">
    <text evidence="2">Belongs to the eIF-3 subunit D family.</text>
</comment>